<proteinExistence type="inferred from homology"/>
<comment type="subcellular location">
    <subcellularLocation>
        <location evidence="3">Secreted</location>
    </subcellularLocation>
</comment>
<feature type="signal peptide" evidence="1">
    <location>
        <begin position="1"/>
        <end position="15"/>
    </location>
</feature>
<feature type="chain" id="PRO_0000348180" description="Putative uncharacterized protein DDB_G0277445">
    <location>
        <begin position="16"/>
        <end position="68"/>
    </location>
</feature>
<feature type="region of interest" description="Disordered" evidence="2">
    <location>
        <begin position="14"/>
        <end position="68"/>
    </location>
</feature>
<feature type="compositionally biased region" description="Low complexity" evidence="2">
    <location>
        <begin position="22"/>
        <end position="59"/>
    </location>
</feature>
<feature type="glycosylation site" description="N-linked (GlcNAc...) asparagine" evidence="1">
    <location>
        <position position="18"/>
    </location>
</feature>
<feature type="glycosylation site" description="N-linked (GlcNAc...) asparagine" evidence="1">
    <location>
        <position position="58"/>
    </location>
</feature>
<dbReference type="EMBL" id="AAFI02000020">
    <property type="protein sequence ID" value="EAL68685.1"/>
    <property type="molecule type" value="Genomic_DNA"/>
</dbReference>
<dbReference type="RefSeq" id="XP_642647.1">
    <property type="nucleotide sequence ID" value="XM_637555.1"/>
</dbReference>
<dbReference type="GlyGen" id="Q8MN60">
    <property type="glycosylation" value="2 sites"/>
</dbReference>
<dbReference type="EnsemblProtists" id="EAL68685">
    <property type="protein sequence ID" value="EAL68685"/>
    <property type="gene ID" value="DDB_G0277445"/>
</dbReference>
<dbReference type="GeneID" id="8621063"/>
<dbReference type="KEGG" id="ddi:DDB_G0277445"/>
<dbReference type="dictyBase" id="DDB_G0277445"/>
<dbReference type="HOGENOM" id="CLU_204857_0_0_1"/>
<dbReference type="InParanoid" id="Q8MN60"/>
<dbReference type="PRO" id="PR:Q8MN60"/>
<dbReference type="Proteomes" id="UP000002195">
    <property type="component" value="Chromosome 2"/>
</dbReference>
<dbReference type="GO" id="GO:0005576">
    <property type="term" value="C:extracellular region"/>
    <property type="evidence" value="ECO:0007669"/>
    <property type="project" value="UniProtKB-SubCell"/>
</dbReference>
<accession>Q8MN60</accession>
<accession>Q54ZJ5</accession>
<organism>
    <name type="scientific">Dictyostelium discoideum</name>
    <name type="common">Social amoeba</name>
    <dbReference type="NCBI Taxonomy" id="44689"/>
    <lineage>
        <taxon>Eukaryota</taxon>
        <taxon>Amoebozoa</taxon>
        <taxon>Evosea</taxon>
        <taxon>Eumycetozoa</taxon>
        <taxon>Dictyostelia</taxon>
        <taxon>Dictyosteliales</taxon>
        <taxon>Dictyosteliaceae</taxon>
        <taxon>Dictyostelium</taxon>
    </lineage>
</organism>
<keyword id="KW-0325">Glycoprotein</keyword>
<keyword id="KW-1185">Reference proteome</keyword>
<keyword id="KW-0964">Secreted</keyword>
<keyword id="KW-0732">Signal</keyword>
<protein>
    <recommendedName>
        <fullName>Putative uncharacterized protein DDB_G0277445</fullName>
    </recommendedName>
</protein>
<reference key="1">
    <citation type="journal article" date="2002" name="Nature">
        <title>Sequence and analysis of chromosome 2 of Dictyostelium discoideum.</title>
        <authorList>
            <person name="Gloeckner G."/>
            <person name="Eichinger L."/>
            <person name="Szafranski K."/>
            <person name="Pachebat J.A."/>
            <person name="Bankier A.T."/>
            <person name="Dear P.H."/>
            <person name="Lehmann R."/>
            <person name="Baumgart C."/>
            <person name="Parra G."/>
            <person name="Abril J.F."/>
            <person name="Guigo R."/>
            <person name="Kumpf K."/>
            <person name="Tunggal B."/>
            <person name="Cox E.C."/>
            <person name="Quail M.A."/>
            <person name="Platzer M."/>
            <person name="Rosenthal A."/>
            <person name="Noegel A.A."/>
        </authorList>
    </citation>
    <scope>NUCLEOTIDE SEQUENCE [LARGE SCALE GENOMIC DNA]</scope>
    <source>
        <strain>AX4</strain>
    </source>
</reference>
<reference key="2">
    <citation type="journal article" date="2005" name="Nature">
        <title>The genome of the social amoeba Dictyostelium discoideum.</title>
        <authorList>
            <person name="Eichinger L."/>
            <person name="Pachebat J.A."/>
            <person name="Gloeckner G."/>
            <person name="Rajandream M.A."/>
            <person name="Sucgang R."/>
            <person name="Berriman M."/>
            <person name="Song J."/>
            <person name="Olsen R."/>
            <person name="Szafranski K."/>
            <person name="Xu Q."/>
            <person name="Tunggal B."/>
            <person name="Kummerfeld S."/>
            <person name="Madera M."/>
            <person name="Konfortov B.A."/>
            <person name="Rivero F."/>
            <person name="Bankier A.T."/>
            <person name="Lehmann R."/>
            <person name="Hamlin N."/>
            <person name="Davies R."/>
            <person name="Gaudet P."/>
            <person name="Fey P."/>
            <person name="Pilcher K."/>
            <person name="Chen G."/>
            <person name="Saunders D."/>
            <person name="Sodergren E.J."/>
            <person name="Davis P."/>
            <person name="Kerhornou A."/>
            <person name="Nie X."/>
            <person name="Hall N."/>
            <person name="Anjard C."/>
            <person name="Hemphill L."/>
            <person name="Bason N."/>
            <person name="Farbrother P."/>
            <person name="Desany B."/>
            <person name="Just E."/>
            <person name="Morio T."/>
            <person name="Rost R."/>
            <person name="Churcher C.M."/>
            <person name="Cooper J."/>
            <person name="Haydock S."/>
            <person name="van Driessche N."/>
            <person name="Cronin A."/>
            <person name="Goodhead I."/>
            <person name="Muzny D.M."/>
            <person name="Mourier T."/>
            <person name="Pain A."/>
            <person name="Lu M."/>
            <person name="Harper D."/>
            <person name="Lindsay R."/>
            <person name="Hauser H."/>
            <person name="James K.D."/>
            <person name="Quiles M."/>
            <person name="Madan Babu M."/>
            <person name="Saito T."/>
            <person name="Buchrieser C."/>
            <person name="Wardroper A."/>
            <person name="Felder M."/>
            <person name="Thangavelu M."/>
            <person name="Johnson D."/>
            <person name="Knights A."/>
            <person name="Loulseged H."/>
            <person name="Mungall K.L."/>
            <person name="Oliver K."/>
            <person name="Price C."/>
            <person name="Quail M.A."/>
            <person name="Urushihara H."/>
            <person name="Hernandez J."/>
            <person name="Rabbinowitsch E."/>
            <person name="Steffen D."/>
            <person name="Sanders M."/>
            <person name="Ma J."/>
            <person name="Kohara Y."/>
            <person name="Sharp S."/>
            <person name="Simmonds M.N."/>
            <person name="Spiegler S."/>
            <person name="Tivey A."/>
            <person name="Sugano S."/>
            <person name="White B."/>
            <person name="Walker D."/>
            <person name="Woodward J.R."/>
            <person name="Winckler T."/>
            <person name="Tanaka Y."/>
            <person name="Shaulsky G."/>
            <person name="Schleicher M."/>
            <person name="Weinstock G.M."/>
            <person name="Rosenthal A."/>
            <person name="Cox E.C."/>
            <person name="Chisholm R.L."/>
            <person name="Gibbs R.A."/>
            <person name="Loomis W.F."/>
            <person name="Platzer M."/>
            <person name="Kay R.R."/>
            <person name="Williams J.G."/>
            <person name="Dear P.H."/>
            <person name="Noegel A.A."/>
            <person name="Barrell B.G."/>
            <person name="Kuspa A."/>
        </authorList>
    </citation>
    <scope>NUCLEOTIDE SEQUENCE [LARGE SCALE GENOMIC DNA]</scope>
    <source>
        <strain>AX4</strain>
    </source>
</reference>
<evidence type="ECO:0000255" key="1"/>
<evidence type="ECO:0000256" key="2">
    <source>
        <dbReference type="SAM" id="MobiDB-lite"/>
    </source>
</evidence>
<evidence type="ECO:0000305" key="3"/>
<name>Y9248_DICDI</name>
<gene>
    <name type="ORF">DDB_G0277445</name>
</gene>
<sequence length="68" mass="7721">MTIIFLICLDASTQSTTNNSINNNNNNNNNNNNNNNNNNNNNNNNNNNNNNNNNNNNNNSKVFDFNIF</sequence>